<dbReference type="EC" id="3.1.-.-" evidence="4"/>
<dbReference type="EMBL" id="AJ296101">
    <property type="protein sequence ID" value="CAC37570.1"/>
    <property type="molecule type" value="mRNA"/>
</dbReference>
<dbReference type="EMBL" id="AF395747">
    <property type="protein sequence ID" value="AAM53255.1"/>
    <property type="molecule type" value="mRNA"/>
</dbReference>
<dbReference type="EMBL" id="AF395748">
    <property type="protein sequence ID" value="AAM53256.1"/>
    <property type="molecule type" value="mRNA"/>
</dbReference>
<dbReference type="EMBL" id="AF395749">
    <property type="protein sequence ID" value="AAM53257.1"/>
    <property type="molecule type" value="mRNA"/>
</dbReference>
<dbReference type="EMBL" id="AF395750">
    <property type="protein sequence ID" value="AAM53258.1"/>
    <property type="molecule type" value="mRNA"/>
</dbReference>
<dbReference type="EMBL" id="AF395751">
    <property type="protein sequence ID" value="AAM53259.1"/>
    <property type="molecule type" value="mRNA"/>
</dbReference>
<dbReference type="EMBL" id="AF395752">
    <property type="protein sequence ID" value="AAM53260.1"/>
    <property type="molecule type" value="mRNA"/>
</dbReference>
<dbReference type="EMBL" id="AK021422">
    <property type="protein sequence ID" value="BAB13820.1"/>
    <property type="molecule type" value="mRNA"/>
</dbReference>
<dbReference type="EMBL" id="DQ504427">
    <property type="protein sequence ID" value="ABF47101.1"/>
    <property type="molecule type" value="Genomic_DNA"/>
</dbReference>
<dbReference type="EMBL" id="AC069544">
    <property type="status" value="NOT_ANNOTATED_CDS"/>
    <property type="molecule type" value="Genomic_DNA"/>
</dbReference>
<dbReference type="EMBL" id="AL360083">
    <property type="status" value="NOT_ANNOTATED_CDS"/>
    <property type="molecule type" value="Genomic_DNA"/>
</dbReference>
<dbReference type="EMBL" id="CH471072">
    <property type="protein sequence ID" value="EAW86248.1"/>
    <property type="molecule type" value="Genomic_DNA"/>
</dbReference>
<dbReference type="EMBL" id="CH471072">
    <property type="protein sequence ID" value="EAW86250.1"/>
    <property type="molecule type" value="Genomic_DNA"/>
</dbReference>
<dbReference type="EMBL" id="CH471072">
    <property type="protein sequence ID" value="EAW86251.1"/>
    <property type="molecule type" value="Genomic_DNA"/>
</dbReference>
<dbReference type="EMBL" id="BC000863">
    <property type="protein sequence ID" value="AAH00863.1"/>
    <property type="molecule type" value="mRNA"/>
</dbReference>
<dbReference type="EMBL" id="BC009185">
    <property type="protein sequence ID" value="AAH09185.1"/>
    <property type="molecule type" value="mRNA"/>
</dbReference>
<dbReference type="EMBL" id="BC022254">
    <property type="protein sequence ID" value="AAH22254.1"/>
    <property type="molecule type" value="mRNA"/>
</dbReference>
<dbReference type="CCDS" id="CCDS31149.1">
    <molecule id="Q96SD1-1"/>
</dbReference>
<dbReference type="CCDS" id="CCDS31150.1">
    <molecule id="Q96SD1-2"/>
</dbReference>
<dbReference type="CCDS" id="CCDS7105.1">
    <molecule id="Q96SD1-3"/>
</dbReference>
<dbReference type="RefSeq" id="NP_001029027.1">
    <molecule id="Q96SD1-1"/>
    <property type="nucleotide sequence ID" value="NM_001033855.3"/>
</dbReference>
<dbReference type="RefSeq" id="NP_001029029.1">
    <molecule id="Q96SD1-2"/>
    <property type="nucleotide sequence ID" value="NM_001033857.3"/>
</dbReference>
<dbReference type="RefSeq" id="NP_001029030.1">
    <molecule id="Q96SD1-2"/>
    <property type="nucleotide sequence ID" value="NM_001033858.3"/>
</dbReference>
<dbReference type="RefSeq" id="NP_001276005.1">
    <molecule id="Q96SD1-3"/>
    <property type="nucleotide sequence ID" value="NM_001289076.2"/>
</dbReference>
<dbReference type="RefSeq" id="NP_001276006.1">
    <molecule id="Q96SD1-2"/>
    <property type="nucleotide sequence ID" value="NM_001289077.2"/>
</dbReference>
<dbReference type="RefSeq" id="NP_001276007.1">
    <molecule id="Q96SD1-3"/>
    <property type="nucleotide sequence ID" value="NM_001289078.2"/>
</dbReference>
<dbReference type="RefSeq" id="NP_001276008.1">
    <molecule id="Q96SD1-2"/>
    <property type="nucleotide sequence ID" value="NM_001289079.2"/>
</dbReference>
<dbReference type="RefSeq" id="NP_071932.2">
    <molecule id="Q96SD1-3"/>
    <property type="nucleotide sequence ID" value="NM_022487.4"/>
</dbReference>
<dbReference type="RefSeq" id="XP_006717554.1">
    <property type="nucleotide sequence ID" value="XM_006717491.3"/>
</dbReference>
<dbReference type="RefSeq" id="XP_011517918.1">
    <property type="nucleotide sequence ID" value="XM_011519616.1"/>
</dbReference>
<dbReference type="RefSeq" id="XP_011517919.1">
    <property type="nucleotide sequence ID" value="XM_011519617.1"/>
</dbReference>
<dbReference type="RefSeq" id="XP_011517921.1">
    <property type="nucleotide sequence ID" value="XM_011519619.1"/>
</dbReference>
<dbReference type="RefSeq" id="XP_016872046.1">
    <property type="nucleotide sequence ID" value="XM_017016557.1"/>
</dbReference>
<dbReference type="RefSeq" id="XP_016872047.1">
    <property type="nucleotide sequence ID" value="XM_017016558.1"/>
</dbReference>
<dbReference type="RefSeq" id="XP_047281604.1">
    <molecule id="Q96SD1-3"/>
    <property type="nucleotide sequence ID" value="XM_047425648.1"/>
</dbReference>
<dbReference type="RefSeq" id="XP_047281605.1">
    <molecule id="Q96SD1-3"/>
    <property type="nucleotide sequence ID" value="XM_047425649.1"/>
</dbReference>
<dbReference type="RefSeq" id="XP_047281606.1">
    <molecule id="Q96SD1-3"/>
    <property type="nucleotide sequence ID" value="XM_047425650.1"/>
</dbReference>
<dbReference type="RefSeq" id="XP_047281607.1">
    <molecule id="Q96SD1-3"/>
    <property type="nucleotide sequence ID" value="XM_047425651.1"/>
</dbReference>
<dbReference type="RefSeq" id="XP_047281608.1">
    <molecule id="Q96SD1-2"/>
    <property type="nucleotide sequence ID" value="XM_047425652.1"/>
</dbReference>
<dbReference type="RefSeq" id="XP_054222566.1">
    <molecule id="Q96SD1-3"/>
    <property type="nucleotide sequence ID" value="XM_054366591.1"/>
</dbReference>
<dbReference type="RefSeq" id="XP_054222567.1">
    <molecule id="Q96SD1-3"/>
    <property type="nucleotide sequence ID" value="XM_054366592.1"/>
</dbReference>
<dbReference type="RefSeq" id="XP_054222568.1">
    <molecule id="Q96SD1-3"/>
    <property type="nucleotide sequence ID" value="XM_054366593.1"/>
</dbReference>
<dbReference type="RefSeq" id="XP_054222569.1">
    <molecule id="Q96SD1-3"/>
    <property type="nucleotide sequence ID" value="XM_054366594.1"/>
</dbReference>
<dbReference type="RefSeq" id="XP_054222570.1">
    <molecule id="Q96SD1-2"/>
    <property type="nucleotide sequence ID" value="XM_054366595.1"/>
</dbReference>
<dbReference type="PDB" id="3W1B">
    <property type="method" value="X-ray"/>
    <property type="resolution" value="2.40 A"/>
    <property type="chains" value="B=485-495"/>
</dbReference>
<dbReference type="PDB" id="3W1G">
    <property type="method" value="X-ray"/>
    <property type="resolution" value="2.55 A"/>
    <property type="chains" value="B=485-495"/>
</dbReference>
<dbReference type="PDB" id="4HTP">
    <property type="method" value="X-ray"/>
    <property type="resolution" value="2.25 A"/>
    <property type="chains" value="C/E=485-495"/>
</dbReference>
<dbReference type="PDB" id="6TT5">
    <property type="method" value="X-ray"/>
    <property type="resolution" value="1.50 A"/>
    <property type="chains" value="AAA=1-361"/>
</dbReference>
<dbReference type="PDB" id="6WNL">
    <property type="method" value="X-ray"/>
    <property type="resolution" value="2.37 A"/>
    <property type="chains" value="A/B=2-368"/>
</dbReference>
<dbReference type="PDB" id="6WO0">
    <property type="method" value="X-ray"/>
    <property type="resolution" value="1.97 A"/>
    <property type="chains" value="A=2-368"/>
</dbReference>
<dbReference type="PDB" id="7ABS">
    <property type="method" value="X-ray"/>
    <property type="resolution" value="1.97 A"/>
    <property type="chains" value="A=2-368"/>
</dbReference>
<dbReference type="PDB" id="7AF1">
    <property type="method" value="X-ray"/>
    <property type="resolution" value="1.70 A"/>
    <property type="chains" value="A=1-361"/>
</dbReference>
<dbReference type="PDB" id="7AFS">
    <property type="method" value="X-ray"/>
    <property type="resolution" value="1.70 A"/>
    <property type="chains" value="A=1-361"/>
</dbReference>
<dbReference type="PDB" id="7AFU">
    <property type="method" value="X-ray"/>
    <property type="resolution" value="1.56 A"/>
    <property type="chains" value="A=1-361"/>
</dbReference>
<dbReference type="PDB" id="7AGI">
    <property type="method" value="X-ray"/>
    <property type="resolution" value="1.70 A"/>
    <property type="chains" value="A=1-361"/>
</dbReference>
<dbReference type="PDB" id="7APV">
    <property type="method" value="X-ray"/>
    <property type="resolution" value="1.95 A"/>
    <property type="chains" value="A=1-361"/>
</dbReference>
<dbReference type="PDB" id="7SGL">
    <property type="method" value="EM"/>
    <property type="resolution" value="3.00 A"/>
    <property type="chains" value="D=1-692"/>
</dbReference>
<dbReference type="PDB" id="7TYR">
    <property type="method" value="EM"/>
    <property type="resolution" value="3.33 A"/>
    <property type="chains" value="C=1-692"/>
</dbReference>
<dbReference type="PDBsum" id="3W1B"/>
<dbReference type="PDBsum" id="3W1G"/>
<dbReference type="PDBsum" id="4HTP"/>
<dbReference type="PDBsum" id="6TT5"/>
<dbReference type="PDBsum" id="6WNL"/>
<dbReference type="PDBsum" id="6WO0"/>
<dbReference type="PDBsum" id="7ABS"/>
<dbReference type="PDBsum" id="7AF1"/>
<dbReference type="PDBsum" id="7AFS"/>
<dbReference type="PDBsum" id="7AFU"/>
<dbReference type="PDBsum" id="7AGI"/>
<dbReference type="PDBsum" id="7APV"/>
<dbReference type="PDBsum" id="7SGL"/>
<dbReference type="PDBsum" id="7TYR"/>
<dbReference type="EMDB" id="EMD-25113"/>
<dbReference type="EMDB" id="EMD-26192"/>
<dbReference type="EMDB" id="EMD-26198"/>
<dbReference type="SMR" id="Q96SD1"/>
<dbReference type="BioGRID" id="122170">
    <property type="interactions" value="42"/>
</dbReference>
<dbReference type="CORUM" id="Q96SD1"/>
<dbReference type="FunCoup" id="Q96SD1">
    <property type="interactions" value="1463"/>
</dbReference>
<dbReference type="IntAct" id="Q96SD1">
    <property type="interactions" value="25"/>
</dbReference>
<dbReference type="STRING" id="9606.ENSP00000367527"/>
<dbReference type="BindingDB" id="Q96SD1"/>
<dbReference type="GlyCosmos" id="Q96SD1">
    <property type="glycosylation" value="1 site, 1 glycan"/>
</dbReference>
<dbReference type="GlyGen" id="Q96SD1">
    <property type="glycosylation" value="1 site, 1 O-linked glycan (1 site)"/>
</dbReference>
<dbReference type="iPTMnet" id="Q96SD1"/>
<dbReference type="PhosphoSitePlus" id="Q96SD1"/>
<dbReference type="BioMuta" id="DCLRE1C"/>
<dbReference type="DMDM" id="71153325"/>
<dbReference type="jPOST" id="Q96SD1"/>
<dbReference type="MassIVE" id="Q96SD1"/>
<dbReference type="PaxDb" id="9606-ENSP00000367527"/>
<dbReference type="PeptideAtlas" id="Q96SD1"/>
<dbReference type="ProteomicsDB" id="78103">
    <molecule id="Q96SD1-1"/>
</dbReference>
<dbReference type="ProteomicsDB" id="78104">
    <molecule id="Q96SD1-2"/>
</dbReference>
<dbReference type="ProteomicsDB" id="78105">
    <molecule id="Q96SD1-3"/>
</dbReference>
<dbReference type="ProteomicsDB" id="78106">
    <molecule id="Q96SD1-4"/>
</dbReference>
<dbReference type="Antibodypedia" id="24989">
    <property type="antibodies" value="359 antibodies from 34 providers"/>
</dbReference>
<dbReference type="DNASU" id="64421"/>
<dbReference type="Ensembl" id="ENST00000378278.7">
    <molecule id="Q96SD1-1"/>
    <property type="protein sequence ID" value="ENSP00000367527.2"/>
    <property type="gene ID" value="ENSG00000152457.19"/>
</dbReference>
<dbReference type="Ensembl" id="ENST00000378289.8">
    <molecule id="Q96SD1-4"/>
    <property type="protein sequence ID" value="ENSP00000367538.4"/>
    <property type="gene ID" value="ENSG00000152457.19"/>
</dbReference>
<dbReference type="Ensembl" id="ENST00000697075.1">
    <molecule id="Q96SD1-1"/>
    <property type="protein sequence ID" value="ENSP00000513090.1"/>
    <property type="gene ID" value="ENSG00000152457.19"/>
</dbReference>
<dbReference type="GeneID" id="64421"/>
<dbReference type="KEGG" id="hsa:64421"/>
<dbReference type="MANE-Select" id="ENST00000378278.7">
    <property type="protein sequence ID" value="ENSP00000367527.2"/>
    <property type="RefSeq nucleotide sequence ID" value="NM_001033855.3"/>
    <property type="RefSeq protein sequence ID" value="NP_001029027.1"/>
</dbReference>
<dbReference type="UCSC" id="uc001inl.5">
    <molecule id="Q96SD1-1"/>
    <property type="organism name" value="human"/>
</dbReference>
<dbReference type="AGR" id="HGNC:17642"/>
<dbReference type="CTD" id="64421"/>
<dbReference type="DisGeNET" id="64421"/>
<dbReference type="GeneCards" id="DCLRE1C"/>
<dbReference type="HGNC" id="HGNC:17642">
    <property type="gene designation" value="DCLRE1C"/>
</dbReference>
<dbReference type="HPA" id="ENSG00000152457">
    <property type="expression patterns" value="Low tissue specificity"/>
</dbReference>
<dbReference type="MalaCards" id="DCLRE1C"/>
<dbReference type="MIM" id="602450">
    <property type="type" value="phenotype"/>
</dbReference>
<dbReference type="MIM" id="603554">
    <property type="type" value="phenotype"/>
</dbReference>
<dbReference type="MIM" id="605988">
    <property type="type" value="gene"/>
</dbReference>
<dbReference type="neXtProt" id="NX_Q96SD1"/>
<dbReference type="OpenTargets" id="ENSG00000152457"/>
<dbReference type="Orphanet" id="39041">
    <property type="disease" value="Omenn syndrome"/>
</dbReference>
<dbReference type="Orphanet" id="275">
    <property type="disease" value="Severe combined immunodeficiency due to DCLRE1C deficiency"/>
</dbReference>
<dbReference type="PharmGKB" id="PA27176"/>
<dbReference type="VEuPathDB" id="HostDB:ENSG00000152457"/>
<dbReference type="eggNOG" id="KOG1361">
    <property type="taxonomic scope" value="Eukaryota"/>
</dbReference>
<dbReference type="GeneTree" id="ENSGT00940000157779"/>
<dbReference type="HOGENOM" id="CLU_005260_1_1_1"/>
<dbReference type="InParanoid" id="Q96SD1"/>
<dbReference type="OMA" id="PANHCAG"/>
<dbReference type="OrthoDB" id="262529at2759"/>
<dbReference type="PAN-GO" id="Q96SD1">
    <property type="GO annotations" value="5 GO annotations based on evolutionary models"/>
</dbReference>
<dbReference type="PhylomeDB" id="Q96SD1"/>
<dbReference type="TreeFam" id="TF329572"/>
<dbReference type="PathwayCommons" id="Q96SD1"/>
<dbReference type="Reactome" id="R-HSA-5693571">
    <property type="pathway name" value="Nonhomologous End-Joining (NHEJ)"/>
</dbReference>
<dbReference type="SignaLink" id="Q96SD1"/>
<dbReference type="SIGNOR" id="Q96SD1"/>
<dbReference type="BioGRID-ORCS" id="64421">
    <property type="hits" value="17 hits in 1161 CRISPR screens"/>
</dbReference>
<dbReference type="ChiTaRS" id="DCLRE1C">
    <property type="organism name" value="human"/>
</dbReference>
<dbReference type="EvolutionaryTrace" id="Q96SD1"/>
<dbReference type="GenomeRNAi" id="64421"/>
<dbReference type="Pharos" id="Q96SD1">
    <property type="development level" value="Tbio"/>
</dbReference>
<dbReference type="PRO" id="PR:Q96SD1"/>
<dbReference type="Proteomes" id="UP000005640">
    <property type="component" value="Chromosome 10"/>
</dbReference>
<dbReference type="RNAct" id="Q96SD1">
    <property type="molecule type" value="protein"/>
</dbReference>
<dbReference type="Bgee" id="ENSG00000152457">
    <property type="expression patterns" value="Expressed in buccal mucosa cell and 209 other cell types or tissues"/>
</dbReference>
<dbReference type="ExpressionAtlas" id="Q96SD1">
    <property type="expression patterns" value="baseline and differential"/>
</dbReference>
<dbReference type="GO" id="GO:0005794">
    <property type="term" value="C:Golgi apparatus"/>
    <property type="evidence" value="ECO:0000314"/>
    <property type="project" value="HPA"/>
</dbReference>
<dbReference type="GO" id="GO:0070419">
    <property type="term" value="C:nonhomologous end joining complex"/>
    <property type="evidence" value="ECO:0000314"/>
    <property type="project" value="UniProtKB"/>
</dbReference>
<dbReference type="GO" id="GO:0005654">
    <property type="term" value="C:nucleoplasm"/>
    <property type="evidence" value="ECO:0000314"/>
    <property type="project" value="HPA"/>
</dbReference>
<dbReference type="GO" id="GO:0035312">
    <property type="term" value="F:5'-3' DNA exonuclease activity"/>
    <property type="evidence" value="ECO:0000318"/>
    <property type="project" value="GO_Central"/>
</dbReference>
<dbReference type="GO" id="GO:0008409">
    <property type="term" value="F:5'-3' exonuclease activity"/>
    <property type="evidence" value="ECO:0000314"/>
    <property type="project" value="MGI"/>
</dbReference>
<dbReference type="GO" id="GO:0003684">
    <property type="term" value="F:damaged DNA binding"/>
    <property type="evidence" value="ECO:0000318"/>
    <property type="project" value="GO_Central"/>
</dbReference>
<dbReference type="GO" id="GO:0004519">
    <property type="term" value="F:endonuclease activity"/>
    <property type="evidence" value="ECO:0000304"/>
    <property type="project" value="Reactome"/>
</dbReference>
<dbReference type="GO" id="GO:0000014">
    <property type="term" value="F:single-stranded DNA endodeoxyribonuclease activity"/>
    <property type="evidence" value="ECO:0000314"/>
    <property type="project" value="MGI"/>
</dbReference>
<dbReference type="GO" id="GO:0002250">
    <property type="term" value="P:adaptive immune response"/>
    <property type="evidence" value="ECO:0007669"/>
    <property type="project" value="UniProtKB-KW"/>
</dbReference>
<dbReference type="GO" id="GO:0030183">
    <property type="term" value="P:B cell differentiation"/>
    <property type="evidence" value="ECO:0007669"/>
    <property type="project" value="Ensembl"/>
</dbReference>
<dbReference type="GO" id="GO:0006303">
    <property type="term" value="P:double-strand break repair via nonhomologous end joining"/>
    <property type="evidence" value="ECO:0000318"/>
    <property type="project" value="GO_Central"/>
</dbReference>
<dbReference type="GO" id="GO:0036297">
    <property type="term" value="P:interstrand cross-link repair"/>
    <property type="evidence" value="ECO:0000318"/>
    <property type="project" value="GO_Central"/>
</dbReference>
<dbReference type="GO" id="GO:0010212">
    <property type="term" value="P:response to ionizing radiation"/>
    <property type="evidence" value="ECO:0007669"/>
    <property type="project" value="Ensembl"/>
</dbReference>
<dbReference type="GO" id="GO:0000723">
    <property type="term" value="P:telomere maintenance"/>
    <property type="evidence" value="ECO:0000318"/>
    <property type="project" value="GO_Central"/>
</dbReference>
<dbReference type="GO" id="GO:0033151">
    <property type="term" value="P:V(D)J recombination"/>
    <property type="evidence" value="ECO:0007669"/>
    <property type="project" value="Ensembl"/>
</dbReference>
<dbReference type="CDD" id="cd16297">
    <property type="entry name" value="artemis-SNM1C-like_MBL-fold"/>
    <property type="match status" value="1"/>
</dbReference>
<dbReference type="FunFam" id="3.40.50.12650:FF:000002">
    <property type="entry name" value="DNA cross-link repair 1C"/>
    <property type="match status" value="1"/>
</dbReference>
<dbReference type="FunFam" id="3.60.15.10:FF:000018">
    <property type="entry name" value="DNA cross-link repair 1C"/>
    <property type="match status" value="1"/>
</dbReference>
<dbReference type="Gene3D" id="3.40.50.12650">
    <property type="match status" value="1"/>
</dbReference>
<dbReference type="Gene3D" id="3.60.15.10">
    <property type="entry name" value="Ribonuclease Z/Hydroxyacylglutathione hydrolase-like"/>
    <property type="match status" value="1"/>
</dbReference>
<dbReference type="InterPro" id="IPR011084">
    <property type="entry name" value="DRMBL"/>
</dbReference>
<dbReference type="InterPro" id="IPR036866">
    <property type="entry name" value="RibonucZ/Hydroxyglut_hydro"/>
</dbReference>
<dbReference type="PANTHER" id="PTHR23240">
    <property type="entry name" value="DNA CROSS-LINK REPAIR PROTEIN PSO2/SNM1-RELATED"/>
    <property type="match status" value="1"/>
</dbReference>
<dbReference type="PANTHER" id="PTHR23240:SF8">
    <property type="entry name" value="PROTEIN ARTEMIS"/>
    <property type="match status" value="1"/>
</dbReference>
<dbReference type="Pfam" id="PF07522">
    <property type="entry name" value="DRMBL"/>
    <property type="match status" value="1"/>
</dbReference>
<dbReference type="SUPFAM" id="SSF56281">
    <property type="entry name" value="Metallo-hydrolase/oxidoreductase"/>
    <property type="match status" value="1"/>
</dbReference>
<gene>
    <name evidence="31" type="primary">DCLRE1C</name>
    <name evidence="25" type="synonym">ARTEMIS</name>
    <name evidence="25" type="synonym">ASCID</name>
    <name type="synonym">SCIDA</name>
    <name evidence="27" type="synonym">SNM1C</name>
</gene>
<reference key="1">
    <citation type="journal article" date="2001" name="Cell">
        <title>Artemis, a novel DNA double-strand break repair/V(D)J recombination protein, is mutated in human severe combined immune deficiency.</title>
        <authorList>
            <person name="Moshous D."/>
            <person name="Callebaut I."/>
            <person name="de Chasseval R."/>
            <person name="Corneo B."/>
            <person name="Cavazzana-Calvo M."/>
            <person name="le Deist F."/>
            <person name="Tezcan I."/>
            <person name="Sanal O."/>
            <person name="Bertrand Y."/>
            <person name="Philippe N."/>
            <person name="Fischer A."/>
            <person name="de Villartay J.-P."/>
        </authorList>
    </citation>
    <scope>NUCLEOTIDE SEQUENCE [MRNA] (ISOFORM 1)</scope>
    <scope>FUNCTION</scope>
    <scope>TISSUE SPECIFICITY</scope>
    <scope>INVOLVEMENT IN RSSCID</scope>
</reference>
<reference key="2">
    <citation type="journal article" date="2002" name="J. Immunol.">
        <title>A founder mutation in Artemis, an SNM1-like protein, causes SCID in Athabascan-speaking native Americans.</title>
        <authorList>
            <person name="Li L."/>
            <person name="Moshous D."/>
            <person name="Zhou Y."/>
            <person name="Wang J."/>
            <person name="Xie G."/>
            <person name="Salido E."/>
            <person name="Hu D."/>
            <person name="de Villartay J.-P."/>
            <person name="Cowan M.J."/>
        </authorList>
    </citation>
    <scope>NUCLEOTIDE SEQUENCE [MRNA] (ISOFORMS 2 AND 3)</scope>
    <scope>FUNCTION</scope>
    <scope>SUBCELLULAR LOCATION</scope>
    <scope>INVOLVEMENT IN SCIDA</scope>
</reference>
<reference key="3">
    <citation type="journal article" date="2004" name="Nat. Genet.">
        <title>Complete sequencing and characterization of 21,243 full-length human cDNAs.</title>
        <authorList>
            <person name="Ota T."/>
            <person name="Suzuki Y."/>
            <person name="Nishikawa T."/>
            <person name="Otsuki T."/>
            <person name="Sugiyama T."/>
            <person name="Irie R."/>
            <person name="Wakamatsu A."/>
            <person name="Hayashi K."/>
            <person name="Sato H."/>
            <person name="Nagai K."/>
            <person name="Kimura K."/>
            <person name="Makita H."/>
            <person name="Sekine M."/>
            <person name="Obayashi M."/>
            <person name="Nishi T."/>
            <person name="Shibahara T."/>
            <person name="Tanaka T."/>
            <person name="Ishii S."/>
            <person name="Yamamoto J."/>
            <person name="Saito K."/>
            <person name="Kawai Y."/>
            <person name="Isono Y."/>
            <person name="Nakamura Y."/>
            <person name="Nagahari K."/>
            <person name="Murakami K."/>
            <person name="Yasuda T."/>
            <person name="Iwayanagi T."/>
            <person name="Wagatsuma M."/>
            <person name="Shiratori A."/>
            <person name="Sudo H."/>
            <person name="Hosoiri T."/>
            <person name="Kaku Y."/>
            <person name="Kodaira H."/>
            <person name="Kondo H."/>
            <person name="Sugawara M."/>
            <person name="Takahashi M."/>
            <person name="Kanda K."/>
            <person name="Yokoi T."/>
            <person name="Furuya T."/>
            <person name="Kikkawa E."/>
            <person name="Omura Y."/>
            <person name="Abe K."/>
            <person name="Kamihara K."/>
            <person name="Katsuta N."/>
            <person name="Sato K."/>
            <person name="Tanikawa M."/>
            <person name="Yamazaki M."/>
            <person name="Ninomiya K."/>
            <person name="Ishibashi T."/>
            <person name="Yamashita H."/>
            <person name="Murakawa K."/>
            <person name="Fujimori K."/>
            <person name="Tanai H."/>
            <person name="Kimata M."/>
            <person name="Watanabe M."/>
            <person name="Hiraoka S."/>
            <person name="Chiba Y."/>
            <person name="Ishida S."/>
            <person name="Ono Y."/>
            <person name="Takiguchi S."/>
            <person name="Watanabe S."/>
            <person name="Yosida M."/>
            <person name="Hotuta T."/>
            <person name="Kusano J."/>
            <person name="Kanehori K."/>
            <person name="Takahashi-Fujii A."/>
            <person name="Hara H."/>
            <person name="Tanase T.-O."/>
            <person name="Nomura Y."/>
            <person name="Togiya S."/>
            <person name="Komai F."/>
            <person name="Hara R."/>
            <person name="Takeuchi K."/>
            <person name="Arita M."/>
            <person name="Imose N."/>
            <person name="Musashino K."/>
            <person name="Yuuki H."/>
            <person name="Oshima A."/>
            <person name="Sasaki N."/>
            <person name="Aotsuka S."/>
            <person name="Yoshikawa Y."/>
            <person name="Matsunawa H."/>
            <person name="Ichihara T."/>
            <person name="Shiohata N."/>
            <person name="Sano S."/>
            <person name="Moriya S."/>
            <person name="Momiyama H."/>
            <person name="Satoh N."/>
            <person name="Takami S."/>
            <person name="Terashima Y."/>
            <person name="Suzuki O."/>
            <person name="Nakagawa S."/>
            <person name="Senoh A."/>
            <person name="Mizoguchi H."/>
            <person name="Goto Y."/>
            <person name="Shimizu F."/>
            <person name="Wakebe H."/>
            <person name="Hishigaki H."/>
            <person name="Watanabe T."/>
            <person name="Sugiyama A."/>
            <person name="Takemoto M."/>
            <person name="Kawakami B."/>
            <person name="Yamazaki M."/>
            <person name="Watanabe K."/>
            <person name="Kumagai A."/>
            <person name="Itakura S."/>
            <person name="Fukuzumi Y."/>
            <person name="Fujimori Y."/>
            <person name="Komiyama M."/>
            <person name="Tashiro H."/>
            <person name="Tanigami A."/>
            <person name="Fujiwara T."/>
            <person name="Ono T."/>
            <person name="Yamada K."/>
            <person name="Fujii Y."/>
            <person name="Ozaki K."/>
            <person name="Hirao M."/>
            <person name="Ohmori Y."/>
            <person name="Kawabata A."/>
            <person name="Hikiji T."/>
            <person name="Kobatake N."/>
            <person name="Inagaki H."/>
            <person name="Ikema Y."/>
            <person name="Okamoto S."/>
            <person name="Okitani R."/>
            <person name="Kawakami T."/>
            <person name="Noguchi S."/>
            <person name="Itoh T."/>
            <person name="Shigeta K."/>
            <person name="Senba T."/>
            <person name="Matsumura K."/>
            <person name="Nakajima Y."/>
            <person name="Mizuno T."/>
            <person name="Morinaga M."/>
            <person name="Sasaki M."/>
            <person name="Togashi T."/>
            <person name="Oyama M."/>
            <person name="Hata H."/>
            <person name="Watanabe M."/>
            <person name="Komatsu T."/>
            <person name="Mizushima-Sugano J."/>
            <person name="Satoh T."/>
            <person name="Shirai Y."/>
            <person name="Takahashi Y."/>
            <person name="Nakagawa K."/>
            <person name="Okumura K."/>
            <person name="Nagase T."/>
            <person name="Nomura N."/>
            <person name="Kikuchi H."/>
            <person name="Masuho Y."/>
            <person name="Yamashita R."/>
            <person name="Nakai K."/>
            <person name="Yada T."/>
            <person name="Nakamura Y."/>
            <person name="Ohara O."/>
            <person name="Isogai T."/>
            <person name="Sugano S."/>
        </authorList>
    </citation>
    <scope>NUCLEOTIDE SEQUENCE [LARGE SCALE MRNA] (ISOFORM 3)</scope>
    <scope>VARIANT ARG-171</scope>
    <source>
        <tissue>Embryo</tissue>
    </source>
</reference>
<reference key="4">
    <citation type="submission" date="2006-04" db="EMBL/GenBank/DDBJ databases">
        <authorList>
            <consortium name="NIEHS SNPs program"/>
        </authorList>
    </citation>
    <scope>NUCLEOTIDE SEQUENCE [GENOMIC DNA]</scope>
    <scope>VARIANTS VAL-140; ARG-153; ARG-171; ARG-243; CYS-320 AND MET-329</scope>
</reference>
<reference key="5">
    <citation type="journal article" date="2004" name="Nature">
        <title>The DNA sequence and comparative analysis of human chromosome 10.</title>
        <authorList>
            <person name="Deloukas P."/>
            <person name="Earthrowl M.E."/>
            <person name="Grafham D.V."/>
            <person name="Rubenfield M."/>
            <person name="French L."/>
            <person name="Steward C.A."/>
            <person name="Sims S.K."/>
            <person name="Jones M.C."/>
            <person name="Searle S."/>
            <person name="Scott C."/>
            <person name="Howe K."/>
            <person name="Hunt S.E."/>
            <person name="Andrews T.D."/>
            <person name="Gilbert J.G.R."/>
            <person name="Swarbreck D."/>
            <person name="Ashurst J.L."/>
            <person name="Taylor A."/>
            <person name="Battles J."/>
            <person name="Bird C.P."/>
            <person name="Ainscough R."/>
            <person name="Almeida J.P."/>
            <person name="Ashwell R.I.S."/>
            <person name="Ambrose K.D."/>
            <person name="Babbage A.K."/>
            <person name="Bagguley C.L."/>
            <person name="Bailey J."/>
            <person name="Banerjee R."/>
            <person name="Bates K."/>
            <person name="Beasley H."/>
            <person name="Bray-Allen S."/>
            <person name="Brown A.J."/>
            <person name="Brown J.Y."/>
            <person name="Burford D.C."/>
            <person name="Burrill W."/>
            <person name="Burton J."/>
            <person name="Cahill P."/>
            <person name="Camire D."/>
            <person name="Carter N.P."/>
            <person name="Chapman J.C."/>
            <person name="Clark S.Y."/>
            <person name="Clarke G."/>
            <person name="Clee C.M."/>
            <person name="Clegg S."/>
            <person name="Corby N."/>
            <person name="Coulson A."/>
            <person name="Dhami P."/>
            <person name="Dutta I."/>
            <person name="Dunn M."/>
            <person name="Faulkner L."/>
            <person name="Frankish A."/>
            <person name="Frankland J.A."/>
            <person name="Garner P."/>
            <person name="Garnett J."/>
            <person name="Gribble S."/>
            <person name="Griffiths C."/>
            <person name="Grocock R."/>
            <person name="Gustafson E."/>
            <person name="Hammond S."/>
            <person name="Harley J.L."/>
            <person name="Hart E."/>
            <person name="Heath P.D."/>
            <person name="Ho T.P."/>
            <person name="Hopkins B."/>
            <person name="Horne J."/>
            <person name="Howden P.J."/>
            <person name="Huckle E."/>
            <person name="Hynds C."/>
            <person name="Johnson C."/>
            <person name="Johnson D."/>
            <person name="Kana A."/>
            <person name="Kay M."/>
            <person name="Kimberley A.M."/>
            <person name="Kershaw J.K."/>
            <person name="Kokkinaki M."/>
            <person name="Laird G.K."/>
            <person name="Lawlor S."/>
            <person name="Lee H.M."/>
            <person name="Leongamornlert D.A."/>
            <person name="Laird G."/>
            <person name="Lloyd C."/>
            <person name="Lloyd D.M."/>
            <person name="Loveland J."/>
            <person name="Lovell J."/>
            <person name="McLaren S."/>
            <person name="McLay K.E."/>
            <person name="McMurray A."/>
            <person name="Mashreghi-Mohammadi M."/>
            <person name="Matthews L."/>
            <person name="Milne S."/>
            <person name="Nickerson T."/>
            <person name="Nguyen M."/>
            <person name="Overton-Larty E."/>
            <person name="Palmer S.A."/>
            <person name="Pearce A.V."/>
            <person name="Peck A.I."/>
            <person name="Pelan S."/>
            <person name="Phillimore B."/>
            <person name="Porter K."/>
            <person name="Rice C.M."/>
            <person name="Rogosin A."/>
            <person name="Ross M.T."/>
            <person name="Sarafidou T."/>
            <person name="Sehra H.K."/>
            <person name="Shownkeen R."/>
            <person name="Skuce C.D."/>
            <person name="Smith M."/>
            <person name="Standring L."/>
            <person name="Sycamore N."/>
            <person name="Tester J."/>
            <person name="Thorpe A."/>
            <person name="Torcasso W."/>
            <person name="Tracey A."/>
            <person name="Tromans A."/>
            <person name="Tsolas J."/>
            <person name="Wall M."/>
            <person name="Walsh J."/>
            <person name="Wang H."/>
            <person name="Weinstock K."/>
            <person name="West A.P."/>
            <person name="Willey D.L."/>
            <person name="Whitehead S.L."/>
            <person name="Wilming L."/>
            <person name="Wray P.W."/>
            <person name="Young L."/>
            <person name="Chen Y."/>
            <person name="Lovering R.C."/>
            <person name="Moschonas N.K."/>
            <person name="Siebert R."/>
            <person name="Fechtel K."/>
            <person name="Bentley D."/>
            <person name="Durbin R.M."/>
            <person name="Hubbard T."/>
            <person name="Doucette-Stamm L."/>
            <person name="Beck S."/>
            <person name="Smith D.R."/>
            <person name="Rogers J."/>
        </authorList>
    </citation>
    <scope>NUCLEOTIDE SEQUENCE [LARGE SCALE GENOMIC DNA]</scope>
</reference>
<reference key="6">
    <citation type="submission" date="2005-09" db="EMBL/GenBank/DDBJ databases">
        <authorList>
            <person name="Mural R.J."/>
            <person name="Istrail S."/>
            <person name="Sutton G.G."/>
            <person name="Florea L."/>
            <person name="Halpern A.L."/>
            <person name="Mobarry C.M."/>
            <person name="Lippert R."/>
            <person name="Walenz B."/>
            <person name="Shatkay H."/>
            <person name="Dew I."/>
            <person name="Miller J.R."/>
            <person name="Flanigan M.J."/>
            <person name="Edwards N.J."/>
            <person name="Bolanos R."/>
            <person name="Fasulo D."/>
            <person name="Halldorsson B.V."/>
            <person name="Hannenhalli S."/>
            <person name="Turner R."/>
            <person name="Yooseph S."/>
            <person name="Lu F."/>
            <person name="Nusskern D.R."/>
            <person name="Shue B.C."/>
            <person name="Zheng X.H."/>
            <person name="Zhong F."/>
            <person name="Delcher A.L."/>
            <person name="Huson D.H."/>
            <person name="Kravitz S.A."/>
            <person name="Mouchard L."/>
            <person name="Reinert K."/>
            <person name="Remington K.A."/>
            <person name="Clark A.G."/>
            <person name="Waterman M.S."/>
            <person name="Eichler E.E."/>
            <person name="Adams M.D."/>
            <person name="Hunkapiller M.W."/>
            <person name="Myers E.W."/>
            <person name="Venter J.C."/>
        </authorList>
    </citation>
    <scope>NUCLEOTIDE SEQUENCE [LARGE SCALE GENOMIC DNA]</scope>
</reference>
<reference key="7">
    <citation type="journal article" date="2004" name="Genome Res.">
        <title>The status, quality, and expansion of the NIH full-length cDNA project: the Mammalian Gene Collection (MGC).</title>
        <authorList>
            <consortium name="The MGC Project Team"/>
        </authorList>
    </citation>
    <scope>NUCLEOTIDE SEQUENCE [LARGE SCALE MRNA] (ISOFORMS 3 AND 4)</scope>
    <scope>NUCLEOTIDE SEQUENCE [LARGE SCALE MRNA] OF 401-692 (ISOFORMS 1/2/3)</scope>
    <scope>VARIANT ARG-243</scope>
    <source>
        <tissue>Cervix carcinoma</tissue>
        <tissue>Lung carcinoma</tissue>
        <tissue>Skeletal muscle</tissue>
    </source>
</reference>
<reference key="8">
    <citation type="journal article" date="2002" name="Cell">
        <title>Hairpin opening and overhang processing by an Artemis/DNA-dependent protein kinase complex in nonhomologous end joining and V(D)J recombination.</title>
        <authorList>
            <person name="Ma Y."/>
            <person name="Pannicke U."/>
            <person name="Schwarz K."/>
            <person name="Lieber M.R."/>
        </authorList>
    </citation>
    <scope>FUNCTION</scope>
    <scope>INTERACTION WITH PRKDC</scope>
    <scope>PHOSPHORYLATION BY PRKDC</scope>
    <scope>MUTAGENESIS OF ASP-165</scope>
</reference>
<reference key="9">
    <citation type="journal article" date="2002" name="Nucleic Acids Res.">
        <title>Metallo-beta-lactamase fold within nucleic acids processing enzymes: the beta-CASP family.</title>
        <authorList>
            <person name="Callebaut I."/>
            <person name="Moshous D."/>
            <person name="Mornon J.-P."/>
            <person name="de Villartay J.-P."/>
        </authorList>
    </citation>
    <scope>DNA REPAIR METALLO-BETA-LACTAMASE FAMILY</scope>
</reference>
<reference key="10">
    <citation type="journal article" date="2004" name="EMBO J.">
        <title>Functional and biochemical dissection of the structure-specific nuclease ARTEMIS.</title>
        <authorList>
            <person name="Pannicke U."/>
            <person name="Ma Y."/>
            <person name="Hopfner K.-P."/>
            <person name="Niewolik D."/>
            <person name="Lieber M.R."/>
            <person name="Schwarz K."/>
        </authorList>
    </citation>
    <scope>FUNCTION</scope>
    <scope>SUBCELLULAR LOCATION</scope>
    <scope>MUTAGENESIS OF ASP-17; HIS-33; HIS-35; ASP-37; HIS-38; HIS-115; ASP-136; ASP-165 AND HIS-319</scope>
    <scope>PHOSPHORYLATION BY PRKDC</scope>
</reference>
<reference key="11">
    <citation type="journal article" date="2004" name="Eur. J. Immunol.">
        <title>Phosphorylation of Artemis following irradiation-induced DNA damage.</title>
        <authorList>
            <person name="Poinsignon C."/>
            <person name="de Chasseval R."/>
            <person name="Soubeyrand S."/>
            <person name="Moshous D."/>
            <person name="Fischer A."/>
            <person name="Hache R.J.G."/>
            <person name="de Villartay J.-P."/>
        </authorList>
    </citation>
    <scope>FUNCTION</scope>
    <scope>MUTAGENESIS OF SER-516; SER-534; SER-538; SER-548; SER-553; SER-561 AND SER-562</scope>
    <scope>PHOSPHORYLATION BY ATM</scope>
    <scope>PHOSPHORYLATION AT SER-645</scope>
</reference>
<reference key="12">
    <citation type="journal article" date="2004" name="J. Exp. Med.">
        <title>The metallo-beta-lactamase/beta-CASP domain of Artemis constitutes the catalytic core for V(D)J recombination.</title>
        <authorList>
            <person name="Poinsignon C."/>
            <person name="Moshous D."/>
            <person name="Callebaut I."/>
            <person name="de Chasseval R."/>
            <person name="Villey I."/>
            <person name="de Villartay J.-P."/>
        </authorList>
    </citation>
    <scope>FUNCTION</scope>
    <scope>INTERACTION WITH PRKDC</scope>
    <scope>MUTAGENESIS OF ASP-17; HIS-33; HIS-35; ASP-37; HIS-38; HIS-115; ASP-136; ASP-165 AND HIS-319</scope>
</reference>
<reference key="13">
    <citation type="journal article" date="2004" name="Mol. Cell">
        <title>A biochemically defined system for mammalian nonhomologous DNA end joining.</title>
        <authorList>
            <person name="Ma Y."/>
            <person name="Lu H."/>
            <person name="Tippin B."/>
            <person name="Goodman M.F."/>
            <person name="Shimazaki N."/>
            <person name="Koiwai O."/>
            <person name="Hsieh C.-L."/>
            <person name="Schwarz K."/>
            <person name="Lieber M.R."/>
        </authorList>
    </citation>
    <scope>FUNCTION</scope>
    <scope>INTERACTION WITH PRKDC</scope>
</reference>
<reference key="14">
    <citation type="journal article" date="2004" name="Mol. Cell">
        <title>A pathway of double-strand break rejoining dependent upon ATM, Artemis, and proteins locating to gamma-H2AX foci.</title>
        <authorList>
            <person name="Riballo E."/>
            <person name="Kuehne M."/>
            <person name="Rief N."/>
            <person name="Doherty A."/>
            <person name="Smith G.C.M."/>
            <person name="Recio M.-J."/>
            <person name="Reis C."/>
            <person name="Dahm K."/>
            <person name="Fricke A."/>
            <person name="Krempler A."/>
            <person name="Parker A.R."/>
            <person name="Jackson S.P."/>
            <person name="Gennery A."/>
            <person name="Jeggo P.A."/>
            <person name="Loebrich M."/>
        </authorList>
    </citation>
    <scope>FUNCTION</scope>
    <scope>INTERACTION WITH TP53BP1</scope>
    <scope>MUTAGENESIS OF ASP-37</scope>
    <scope>PHOSPHORYLATION BY ATM</scope>
</reference>
<reference key="15">
    <citation type="journal article" date="2004" name="Mol. Cell. Biol.">
        <title>Artemis is a phosphorylation target of ATM and ATR and is involved in the G2/M DNA damage checkpoint response.</title>
        <authorList>
            <person name="Zhang X."/>
            <person name="Succi J."/>
            <person name="Feng Z."/>
            <person name="Prithivirajsingh S."/>
            <person name="Story M.D."/>
            <person name="Legerski R.J."/>
        </authorList>
    </citation>
    <scope>FUNCTION</scope>
    <scope>INTERACTION WITH ATM; BRCA1; THE MRN COMPLEX AND PRKDC</scope>
    <scope>PHOSPHORYLATION BY ATM; ATR AND PRKDC</scope>
</reference>
<reference key="16">
    <citation type="journal article" date="2005" name="Cancer Sci.">
        <title>Ataxia-telangiectasia-mutated dependent phosphorylation of Artemis in response to DNA damage.</title>
        <authorList>
            <person name="Chen L."/>
            <person name="Morio T."/>
            <person name="Minegishi Y."/>
            <person name="Nakada S."/>
            <person name="Nagasawa M."/>
            <person name="Komatsu K."/>
            <person name="Chessa L."/>
            <person name="Villa A."/>
            <person name="Lecis D."/>
            <person name="Delia D."/>
            <person name="Mizutani S."/>
        </authorList>
    </citation>
    <scope>INTERACTION WITH THE MRN COMPLEX</scope>
    <scope>PHOSPHORYLATION BY ATM</scope>
    <scope>PHOSPHORYLATION AT SER-645</scope>
</reference>
<reference key="17">
    <citation type="journal article" date="2005" name="DNA Repair">
        <title>Artemis deficiency confers a DNA double-strand break repair defect and Artemis phosphorylation status is altered by DNA damage and cell cycle progression.</title>
        <authorList>
            <person name="Wang J."/>
            <person name="Pluth J.M."/>
            <person name="Cooper P.K."/>
            <person name="Cowan M.J."/>
            <person name="Chen D.J."/>
            <person name="Yannone S.M."/>
        </authorList>
    </citation>
    <scope>FUNCTION</scope>
    <scope>PHOSPHORYLATION BY PRKDC</scope>
    <scope>PHOSPHORYLATION IN RESPONSE TO DNA DAMAGE</scope>
</reference>
<reference key="18">
    <citation type="journal article" date="2005" name="DNA Repair">
        <title>The Artemis:DNA-PKcs endonuclease cleaves DNA loops, flaps, and gaps.</title>
        <authorList>
            <person name="Ma Y."/>
            <person name="Schwarz K."/>
            <person name="Lieber M.R."/>
        </authorList>
    </citation>
    <scope>FUNCTION</scope>
    <scope>INTERACTION WITH PRKDC</scope>
</reference>
<reference key="19">
    <citation type="journal article" date="2009" name="Sci. Signal.">
        <title>Quantitative phosphoproteomic analysis of T cell receptor signaling reveals system-wide modulation of protein-protein interactions.</title>
        <authorList>
            <person name="Mayya V."/>
            <person name="Lundgren D.H."/>
            <person name="Hwang S.-I."/>
            <person name="Rezaul K."/>
            <person name="Wu L."/>
            <person name="Eng J.K."/>
            <person name="Rodionov V."/>
            <person name="Han D.K."/>
        </authorList>
    </citation>
    <scope>IDENTIFICATION BY MASS SPECTROMETRY [LARGE SCALE ANALYSIS]</scope>
    <source>
        <tissue>Leukemic T-cell</tissue>
    </source>
</reference>
<reference key="20">
    <citation type="journal article" date="2013" name="J. Proteome Res.">
        <title>Toward a comprehensive characterization of a human cancer cell phosphoproteome.</title>
        <authorList>
            <person name="Zhou H."/>
            <person name="Di Palma S."/>
            <person name="Preisinger C."/>
            <person name="Peng M."/>
            <person name="Polat A.N."/>
            <person name="Heck A.J."/>
            <person name="Mohammed S."/>
        </authorList>
    </citation>
    <scope>IDENTIFICATION BY MASS SPECTROMETRY [LARGE SCALE ANALYSIS]</scope>
    <source>
        <tissue>Cervix carcinoma</tissue>
        <tissue>Erythroleukemia</tissue>
    </source>
</reference>
<reference evidence="34" key="21">
    <citation type="journal article" date="2012" name="Cell Rep.">
        <title>Structural basis of DNA ligase IV-Artemis interaction in nonhomologous end-joining.</title>
        <authorList>
            <person name="De Ioannes P."/>
            <person name="Malu S."/>
            <person name="Cortes P."/>
            <person name="Aggarwal A.K."/>
        </authorList>
    </citation>
    <scope>X-RAY CRYSTALLOGRAPHY (2.25 ANGSTROMS) OF 485-495 IN COMPLEX WITH LIG4</scope>
    <scope>INTERACTION WITH LIG4</scope>
</reference>
<reference evidence="32 33" key="22">
    <citation type="journal article" date="2013" name="Structure">
        <title>Structure of the catalytic region of DNA ligase IV in complex with an Artemis fragment sheds light on double-strand break repair.</title>
        <authorList>
            <person name="Ochi T."/>
            <person name="Gu X."/>
            <person name="Blundell T.L."/>
        </authorList>
    </citation>
    <scope>X-RAY CRYSTALLOGRAPHY (2.40 ANGSTROMS) OF 485-495 IN COMPLEX WITH LIG4</scope>
    <scope>INTERACTION WITH LIG4</scope>
</reference>
<reference key="23">
    <citation type="journal article" date="2003" name="Blood">
        <title>Radiosensitive SCID patients with Artemis gene mutations show a complete B-cell differentiation arrest at the pre-B-cell receptor checkpoint in bone marrow.</title>
        <authorList>
            <person name="Noordzij J.G."/>
            <person name="Verkaik N.S."/>
            <person name="van der Burg M."/>
            <person name="van Veelen L.R."/>
            <person name="de Bruin-Versteeg S."/>
            <person name="Wiegant W."/>
            <person name="Vossen J.M.J.J."/>
            <person name="Weemaes C.M.R."/>
            <person name="de Groot R."/>
            <person name="Zdzienicka M.Z."/>
            <person name="van Gent D.C."/>
            <person name="van Dongen J.J.M."/>
        </authorList>
    </citation>
    <scope>VARIANTS RSSCID VAL-118 AND GLU-135</scope>
</reference>
<reference key="24">
    <citation type="journal article" date="2003" name="Clin. Immunol.">
        <title>Expansion of clonotype-restricted HLA-identical maternal CD4+ T cells in a patient with severe combined immunodeficiency and a homozygous mutation in the Artemis gene.</title>
        <authorList>
            <person name="Kobayashi N."/>
            <person name="Agematsu K."/>
            <person name="Nagumo H."/>
            <person name="Yasui K."/>
            <person name="Katsuyama Y."/>
            <person name="Yoshizawa K."/>
            <person name="Ota M."/>
            <person name="Yachie A."/>
            <person name="Komiyama A."/>
        </authorList>
    </citation>
    <scope>INVOLVEMENT IN RSSCID</scope>
</reference>
<reference key="25">
    <citation type="journal article" date="2003" name="Hum. Genet.">
        <title>Novel Artemis gene mutations of radiosensitive severe combined immunodeficiency in Japanese families.</title>
        <authorList>
            <person name="Kobayashi N."/>
            <person name="Agematsu K."/>
            <person name="Sugita K."/>
            <person name="Sako M."/>
            <person name="Nonoyama S."/>
            <person name="Yachie A."/>
            <person name="Kumaki S."/>
            <person name="Tsuchiya S."/>
            <person name="Ochs H.D."/>
            <person name="Sugita K."/>
            <person name="Fukushima Y."/>
            <person name="Komiyama A."/>
        </authorList>
    </citation>
    <scope>INVOLVEMENT IN RSSCID</scope>
</reference>
<reference key="26">
    <citation type="journal article" date="2003" name="J. Clin. Invest.">
        <title>Partial T and B lymphocyte immunodeficiency and predisposition to lymphoma in patients with hypomorphic mutations in Artemis.</title>
        <authorList>
            <person name="Moshous D."/>
            <person name="Pannetier C."/>
            <person name="de Chasseval R."/>
            <person name="le Deist F."/>
            <person name="Cavazzana-Calvo M."/>
            <person name="Romana S."/>
            <person name="Macintyre E."/>
            <person name="Canioni D."/>
            <person name="Brousse N."/>
            <person name="Fischer A."/>
            <person name="Casanova J.-L."/>
            <person name="de Villartay J.-P."/>
        </authorList>
    </citation>
    <scope>INVOLVEMENT IN RSSCID</scope>
</reference>
<reference key="27">
    <citation type="journal article" date="2005" name="Blood">
        <title>Omenn syndrome due to ARTEMIS mutations.</title>
        <authorList>
            <person name="Ege M."/>
            <person name="Ma Y."/>
            <person name="Manfras B."/>
            <person name="Kalwak K."/>
            <person name="Lu H."/>
            <person name="Lieber M.R."/>
            <person name="Schwarz K."/>
            <person name="Pannicke U."/>
        </authorList>
    </citation>
    <scope>VARIANT OS ASP-35</scope>
</reference>
<keyword id="KW-0002">3D-structure</keyword>
<keyword id="KW-1064">Adaptive immunity</keyword>
<keyword id="KW-0025">Alternative splicing</keyword>
<keyword id="KW-0225">Disease variant</keyword>
<keyword id="KW-0227">DNA damage</keyword>
<keyword id="KW-0233">DNA recombination</keyword>
<keyword id="KW-0234">DNA repair</keyword>
<keyword id="KW-0255">Endonuclease</keyword>
<keyword id="KW-0269">Exonuclease</keyword>
<keyword id="KW-0378">Hydrolase</keyword>
<keyword id="KW-0391">Immunity</keyword>
<keyword id="KW-0460">Magnesium</keyword>
<keyword id="KW-0540">Nuclease</keyword>
<keyword id="KW-0539">Nucleus</keyword>
<keyword id="KW-0597">Phosphoprotein</keyword>
<keyword id="KW-1267">Proteomics identification</keyword>
<keyword id="KW-1185">Reference proteome</keyword>
<keyword id="KW-0705">SCID</keyword>
<sequence length="692" mass="78436">MSSFEGQMAEYPTISIDRFDRENLRARAYFLSHCHKDHMKGLRAPTLKRRLECSLKVYLYCSPVTKELLLTSPKYRFWKKRIISIEIETPTQISLVDEASGEKEEIVVTLLPAGHCPGSVMFLFQGNNGTVLYTGDFRLAQGEAARMELLHSGGRVKDIQSVYLDTTFCDPRFYQIPSREECLSGVLELVRSWITRSPYHVVWLNCKAAYGYEYLFTNLSEELGVQVHVNKLDMFRNMPEILHHLTTDRNTQIHACRHPKAEEYFQWSKLPCGITSRNRIPLHIISIKPSTMWFGERSRKTNVIVRTGESSYRACFSFHSSYSEIKDFLSYLCPVNAYPNVIPVGTTMDKVVEILKPLCRSSQSTEPKYKPLGKLKRARTVHRDSEEEDDYLFDDPLPIPLRHKVPYPETFHPEVFSMTAVSEKQPEKLRQTPGCCRAECMQSSRFTNFVDCEESNSESEEEVGIPASLQGDLGSVLHLQKADGDVPQWEVFFKRNDEITDESLENFPSSTVAGGSQSPKLFSDSDGESTHISSQNSSQSTHITEQGSQGWDSQSDTVLLSSQERNSGDITSLDKADYRPTIKENIPASLMEQNVICPKDTYSDLKSRDKDVTIVPSTGEPTTLSSETHIPEEKSLLNLSTNADSQSSSDFEVPSTPEAELPKREHLQYLYEKLATGESIAVKKRKCSLLDT</sequence>
<proteinExistence type="evidence at protein level"/>
<comment type="function">
    <text evidence="3 4 5 11 12 13 14 16 17 20 21">Nuclease involved in DNA non-homologous end joining (NHEJ); required for double-strand break repair and V(D)J recombination (PubMed:11336668, PubMed:11955432, PubMed:12055248, PubMed:14744996, PubMed:15071507, PubMed:15574326, PubMed:15936993). Required for V(D)J recombination, the process by which exons encoding the antigen-binding domains of immunoglobulins and T-cell receptor proteins are assembled from individual V, (D), and J gene segments (PubMed:11336668, PubMed:11955432, PubMed:14744996). V(D)J recombination is initiated by the lymphoid specific RAG endonuclease complex, which generates site specific DNA double strand breaks (DSBs) (PubMed:11336668, PubMed:11955432, PubMed:14744996). These DSBs present two types of DNA end structures: hairpin sealed coding ends and phosphorylated blunt signal ends (PubMed:11336668, PubMed:11955432, PubMed:14744996). These ends are independently repaired by the non homologous end joining (NHEJ) pathway to form coding and signal joints respectively (PubMed:11336668, PubMed:11955432, PubMed:14744996). This protein exhibits single-strand specific 5'-3' exonuclease activity in isolation and acquires endonucleolytic activity on 5' and 3' hairpins and overhangs when in a complex with PRKDC (PubMed:11955432, PubMed:15071507, PubMed:15574326, PubMed:15936993). The latter activity is required specifically for the resolution of closed hairpins prior to the formation of the coding joint (PubMed:11955432). Also required for the repair of complex DSBs induced by ionizing radiation, which require substantial end-processing prior to religation by NHEJ (PubMed:15456891, PubMed:15468306, PubMed:15574327, PubMed:15811628).</text>
</comment>
<comment type="subunit">
    <text evidence="4 11 13 17 18 21 22 23">Interacts with LIG4; the interaction is direct (PubMed:23219551, PubMed:23523427). Interacts with ATM (PubMed:15456891). Interacts with BRCA1 (PubMed:15456891). Interacts with PRKDC (PubMed:11955432, PubMed:14744996, PubMed:15456891, PubMed:15936993). Interacts with TP53BP1 (PubMed:15574327). Also exhibits ATM- and phosphorylation-dependent interaction with the MRN complex, composed of MRE11, RAD50, and NBN (PubMed:15456891, PubMed:15723659).</text>
</comment>
<comment type="interaction">
    <interactant intactId="EBI-11694104">
        <id>Q96SD1</id>
    </interactant>
    <interactant intactId="EBI-847896">
        <id>P49917</id>
        <label>LIG4</label>
    </interactant>
    <organismsDiffer>false</organismsDiffer>
    <experiments>16</experiments>
</comment>
<comment type="interaction">
    <interactant intactId="EBI-11694104">
        <id>Q96SD1</id>
    </interactant>
    <interactant intactId="EBI-352053">
        <id>P78527</id>
        <label>PRKDC</label>
    </interactant>
    <organismsDiffer>false</organismsDiffer>
    <experiments>5</experiments>
</comment>
<comment type="subcellular location">
    <subcellularLocation>
        <location evidence="5 12">Nucleus</location>
    </subcellularLocation>
</comment>
<comment type="alternative products">
    <event type="alternative splicing"/>
    <isoform>
        <id>Q96SD1-1</id>
        <name>1</name>
        <sequence type="displayed"/>
    </isoform>
    <isoform>
        <id>Q96SD1-2</id>
        <name>2</name>
        <name>SCIDA</name>
        <sequence type="described" ref="VSP_014888"/>
    </isoform>
    <isoform>
        <id>Q96SD1-3</id>
        <name>3</name>
        <sequence type="described" ref="VSP_014889 VSP_014890"/>
    </isoform>
    <isoform>
        <id>Q96SD1-4</id>
        <name>4</name>
        <sequence type="described" ref="VSP_014891 VSP_014892"/>
    </isoform>
</comment>
<comment type="tissue specificity">
    <text evidence="3">Ubiquitously expressed, with highest levels in the kidney, lung, pancreas and placenta (at the mRNA level). Expression is not increased in thymus or bone marrow, sites of V(D)J recombination.</text>
</comment>
<comment type="PTM">
    <text evidence="4 12 13 14 17 18 20">Phosphorylation on undefined residues by PRKDC may stimulate endonucleolytic activity on 5' and 3' hairpins and overhangs. PRKDC must remain present, even after phosphorylation, for efficient hairpin opening. Also phosphorylated by ATM in response to ionizing radiation (IR) and by ATR in response to ultraviolet (UV) radiation.</text>
</comment>
<comment type="disease" evidence="3 6 7 8 9">
    <disease id="DI-01020">
        <name>Severe combined immunodeficiency autosomal recessive T-cell-negative/B-cell-negative/NK-cell-positive with sensitivity to ionizing radiation</name>
        <acronym>RSSCID</acronym>
        <description>A form of severe combined immunodeficiency, a genetically and clinically heterogeneous group of rare congenital disorders characterized by impairment of both humoral and cell-mediated immunity, leukopenia, and low or absent antibody levels. Patients present in infancy with recurrent, persistent infections by opportunistic organisms. The common characteristic of all types of SCID is absence of T-cell-mediated cellular immunity due to a defect in T-cell development. Individuals affected by RS-SCID show defects in the DNA repair machinery necessary for coding joint formation and the completion of V(D)J recombination. A subset of cells from such patients show increased radiosensitivity.</description>
        <dbReference type="MIM" id="602450"/>
    </disease>
    <text>The disease is caused by variants affecting the gene represented in this entry.</text>
</comment>
<comment type="disease" evidence="5">
    <disease id="DI-01015">
        <name>Severe combined immunodeficiency Athabaskan type</name>
        <acronym>SCIDA</acronym>
        <description>A variety of SCID with sensitivity to ionizing radiation. A founder mutation has been detected in Athabascan-speaking native Americans, being inherited as an autosomal recessive trait. Affected individuals exhibit clinical symptoms and defects in DNA repair comparable to those seen in RS-SCID.</description>
        <dbReference type="MIM" id="602450"/>
    </disease>
    <text>The disease is caused by variants affecting the gene represented in this entry.</text>
</comment>
<comment type="disease" evidence="19">
    <disease id="DI-02093">
        <name>Omenn syndrome</name>
        <acronym>OS</acronym>
        <description>Severe immunodeficiency characterized by the presence of activated, anergic, oligoclonal T-cells, hypereosinophilia, and high IgE levels.</description>
        <dbReference type="MIM" id="603554"/>
    </disease>
    <text>The disease is caused by variants affecting the gene represented in this entry.</text>
</comment>
<comment type="similarity">
    <text evidence="30">Belongs to the DNA repair metallo-beta-lactamase (DRMBL) family.</text>
</comment>
<comment type="online information" name="DCLRE1Cbase">
    <link uri="https://databases.lovd.nl/shared/genes/DCLRE1C"/>
    <text>DCLRE1C mutation db</text>
</comment>
<name>DCR1C_HUMAN</name>
<accession>Q96SD1</accession>
<accession>D3DRT6</accession>
<accession>Q1HCL2</accession>
<accession>Q5JSR4</accession>
<accession>Q5JSR5</accession>
<accession>Q5JSR7</accession>
<accession>Q5JSR8</accession>
<accession>Q5JSR9</accession>
<accession>Q5JSS0</accession>
<accession>Q5JSS7</accession>
<accession>Q6PK14</accession>
<accession>Q8N101</accession>
<accession>Q8N132</accession>
<accession>Q8TBW9</accession>
<accession>Q9BVW9</accession>
<accession>Q9HAM4</accession>
<feature type="chain" id="PRO_0000209122" description="Protein artemis">
    <location>
        <begin position="1"/>
        <end position="692"/>
    </location>
</feature>
<feature type="region of interest" description="Disordered" evidence="2">
    <location>
        <begin position="504"/>
        <end position="555"/>
    </location>
</feature>
<feature type="region of interest" description="Disordered" evidence="2">
    <location>
        <begin position="640"/>
        <end position="664"/>
    </location>
</feature>
<feature type="compositionally biased region" description="Polar residues" evidence="2">
    <location>
        <begin position="506"/>
        <end position="520"/>
    </location>
</feature>
<feature type="compositionally biased region" description="Low complexity" evidence="2">
    <location>
        <begin position="530"/>
        <end position="543"/>
    </location>
</feature>
<feature type="compositionally biased region" description="Polar residues" evidence="2">
    <location>
        <begin position="544"/>
        <end position="555"/>
    </location>
</feature>
<feature type="compositionally biased region" description="Polar residues" evidence="2">
    <location>
        <begin position="640"/>
        <end position="650"/>
    </location>
</feature>
<feature type="modified residue" description="Phosphothreonine" evidence="1">
    <location>
        <position position="380"/>
    </location>
</feature>
<feature type="modified residue" description="Phosphoserine" evidence="1">
    <location>
        <position position="385"/>
    </location>
</feature>
<feature type="modified residue" description="Phosphoserine; by ATM" evidence="14 18">
    <location>
        <position position="645"/>
    </location>
</feature>
<feature type="splice variant" id="VSP_014888" description="In isoform 2." evidence="26">
    <location>
        <begin position="1"/>
        <end position="120"/>
    </location>
</feature>
<feature type="splice variant" id="VSP_014889" description="In isoform 3." evidence="26 28 29">
    <location>
        <begin position="1"/>
        <end position="115"/>
    </location>
</feature>
<feature type="splice variant" id="VSP_014890" description="In isoform 3." evidence="26 28 29">
    <original>CPGSVM</original>
    <variation>MKHQER</variation>
    <location>
        <begin position="116"/>
        <end position="121"/>
    </location>
</feature>
<feature type="splice variant" id="VSP_014891" description="In isoform 4." evidence="29">
    <original>EEEDDYLFDDPLPIPLRHKVPYPETFHPEVFSMTAVSEKQPEKLRQTPG</original>
    <variation>GSHSVTQARMRWCHHDSLYPLTPGIKRSSCLSLLTSWITGAYRHAQLMI</variation>
    <location>
        <begin position="386"/>
        <end position="434"/>
    </location>
</feature>
<feature type="splice variant" id="VSP_014892" description="In isoform 4." evidence="29">
    <location>
        <begin position="435"/>
        <end position="692"/>
    </location>
</feature>
<feature type="sequence variant" id="VAR_023077" description="In OS; dbSNP:rs121908159." evidence="19">
    <original>H</original>
    <variation>D</variation>
    <location>
        <position position="35"/>
    </location>
</feature>
<feature type="sequence variant" id="VAR_023078" description="In RSSCID." evidence="6">
    <original>G</original>
    <variation>V</variation>
    <location>
        <position position="118"/>
    </location>
</feature>
<feature type="sequence variant" id="VAR_023079" description="In RSSCID." evidence="6">
    <original>G</original>
    <variation>E</variation>
    <location>
        <position position="135"/>
    </location>
</feature>
<feature type="sequence variant" id="VAR_060689" description="In dbSNP:rs41297016." evidence="24">
    <original>A</original>
    <variation>V</variation>
    <location>
        <position position="140"/>
    </location>
</feature>
<feature type="sequence variant" id="VAR_060690" description="In dbSNP:rs41297018." evidence="24">
    <original>G</original>
    <variation>R</variation>
    <location>
        <position position="153"/>
    </location>
</feature>
<feature type="sequence variant" id="VAR_048892" description="In dbSNP:rs35441642." evidence="10 24">
    <original>P</original>
    <variation>R</variation>
    <location>
        <position position="171"/>
    </location>
</feature>
<feature type="sequence variant" id="VAR_048893" description="In dbSNP:rs12768894." evidence="15 24">
    <original>H</original>
    <variation>R</variation>
    <location>
        <position position="243"/>
    </location>
</feature>
<feature type="sequence variant" id="VAR_048894" description="In dbSNP:rs41298896." evidence="24">
    <original>S</original>
    <variation>C</variation>
    <location>
        <position position="320"/>
    </location>
</feature>
<feature type="sequence variant" id="VAR_060691" description="In dbSNP:rs41299658." evidence="24">
    <original>L</original>
    <variation>M</variation>
    <location>
        <position position="329"/>
    </location>
</feature>
<feature type="mutagenesis site" description="Abolishes PRKDC-dependent endonuclease activity and V(D)J recombination." evidence="11 12">
    <original>D</original>
    <variation>N</variation>
    <variation>A</variation>
    <location>
        <position position="17"/>
    </location>
</feature>
<feature type="mutagenesis site" description="Abolishes PRKDC-dependent endonuclease activity and V(D)J recombination." evidence="11 12">
    <original>H</original>
    <variation>A</variation>
    <location>
        <position position="33"/>
    </location>
</feature>
<feature type="mutagenesis site" description="Abolishes PRKDC-dependent endonuclease activity and V(D)J recombination." evidence="11 12">
    <original>H</original>
    <variation>A</variation>
    <location>
        <position position="35"/>
    </location>
</feature>
<feature type="mutagenesis site" description="Abolishes PRKDC-dependent endonuclease activity and V(D)J recombination." evidence="11 12 17">
    <original>D</original>
    <variation>N</variation>
    <variation>A</variation>
    <location>
        <position position="37"/>
    </location>
</feature>
<feature type="mutagenesis site" description="Reduces PRKDC-dependent endonuclease activity, although V(D)J recombination is largely normal." evidence="11 12">
    <original>H</original>
    <variation>A</variation>
    <location>
        <position position="38"/>
    </location>
</feature>
<feature type="mutagenesis site" description="Abolishes PRKDC-dependent endonuclease activity and V(D)J recombination." evidence="11 12">
    <original>H</original>
    <variation>A</variation>
    <location>
        <position position="115"/>
    </location>
</feature>
<feature type="mutagenesis site" description="Abolishes PRKDC-dependent endonuclease activity and V(D)J recombination." evidence="11 12">
    <original>D</original>
    <variation>N</variation>
    <variation>A</variation>
    <location>
        <position position="136"/>
    </location>
</feature>
<feature type="mutagenesis site" description="Abolishes PRKDC-dependent endonuclease activity and V(D)J recombination." evidence="4 11 12">
    <original>D</original>
    <variation>N</variation>
    <variation>A</variation>
    <location>
        <position position="165"/>
    </location>
</feature>
<feature type="mutagenesis site" description="Abolishes PRKDC-dependent endonuclease activity and V(D)J recombination." evidence="11 12">
    <original>H</original>
    <variation>A</variation>
    <location>
        <position position="319"/>
    </location>
</feature>
<feature type="mutagenesis site" description="Reduced IR induced phosphorylation; when associated with A-534; A-538; A-548; A-553; A-561 and A-562." evidence="14">
    <original>S</original>
    <variation>A</variation>
    <location>
        <position position="516"/>
    </location>
</feature>
<feature type="mutagenesis site" description="Reduced IR induced phosphorylation; when associated with A-516; A-538; A-548; A-553; A-561 and A-562." evidence="14">
    <original>S</original>
    <variation>A</variation>
    <location>
        <position position="534"/>
    </location>
</feature>
<feature type="mutagenesis site" description="Reduced IR induced phosphorylation; when associated with A-516; A-534; A-548; A-553; A-561 and A-562." evidence="14">
    <original>S</original>
    <variation>A</variation>
    <location>
        <position position="538"/>
    </location>
</feature>
<feature type="mutagenesis site" description="Reduced IR induced phosphorylation; when associated with A-516; A-534; A-538; A-553; A-561 and A-562." evidence="14">
    <original>S</original>
    <variation>A</variation>
    <location>
        <position position="548"/>
    </location>
</feature>
<feature type="mutagenesis site" description="Reduced IR induced phosphorylation; when associated with A-516; A-534; A-538; A-548; A-561 and A-562." evidence="14">
    <original>S</original>
    <variation>A</variation>
    <location>
        <position position="553"/>
    </location>
</feature>
<feature type="mutagenesis site" description="Reduced IR induced phosphorylation; when associated with A-516; A-534; A-538; A-548; A-553 and A-562." evidence="14">
    <original>S</original>
    <variation>A</variation>
    <location>
        <position position="561"/>
    </location>
</feature>
<feature type="mutagenesis site" description="Reduced IR induced phosphorylation; when associated with A-516; A-534; A-538; A-548; A-553 and A-561." evidence="14">
    <original>S</original>
    <variation>A</variation>
    <location>
        <position position="562"/>
    </location>
</feature>
<feature type="sequence conflict" description="In Ref. 1; CAC37570 and 2; AAM53255/AAM53256/AAM53257/AAM53258/AAM53259/AAM53260." evidence="30" ref="1 2">
    <original>L</original>
    <variation>V</variation>
    <location>
        <position position="560"/>
    </location>
</feature>
<feature type="strand" evidence="36">
    <location>
        <begin position="9"/>
        <end position="11"/>
    </location>
</feature>
<feature type="strand" evidence="38">
    <location>
        <begin position="14"/>
        <end position="17"/>
    </location>
</feature>
<feature type="helix" evidence="38">
    <location>
        <begin position="21"/>
        <end position="25"/>
    </location>
</feature>
<feature type="strand" evidence="38">
    <location>
        <begin position="27"/>
        <end position="30"/>
    </location>
</feature>
<feature type="strand" evidence="37">
    <location>
        <begin position="32"/>
        <end position="34"/>
    </location>
</feature>
<feature type="helix" evidence="38">
    <location>
        <begin position="36"/>
        <end position="38"/>
    </location>
</feature>
<feature type="turn" evidence="38">
    <location>
        <begin position="40"/>
        <end position="43"/>
    </location>
</feature>
<feature type="helix" evidence="38">
    <location>
        <begin position="45"/>
        <end position="53"/>
    </location>
</feature>
<feature type="strand" evidence="38">
    <location>
        <begin position="59"/>
        <end position="61"/>
    </location>
</feature>
<feature type="helix" evidence="38">
    <location>
        <begin position="63"/>
        <end position="71"/>
    </location>
</feature>
<feature type="helix" evidence="38">
    <location>
        <begin position="73"/>
        <end position="81"/>
    </location>
</feature>
<feature type="strand" evidence="38">
    <location>
        <begin position="82"/>
        <end position="84"/>
    </location>
</feature>
<feature type="strand" evidence="38">
    <location>
        <begin position="91"/>
        <end position="96"/>
    </location>
</feature>
<feature type="turn" evidence="38">
    <location>
        <begin position="98"/>
        <end position="100"/>
    </location>
</feature>
<feature type="strand" evidence="38">
    <location>
        <begin position="103"/>
        <end position="112"/>
    </location>
</feature>
<feature type="strand" evidence="38">
    <location>
        <begin position="114"/>
        <end position="116"/>
    </location>
</feature>
<feature type="strand" evidence="38">
    <location>
        <begin position="120"/>
        <end position="126"/>
    </location>
</feature>
<feature type="strand" evidence="38">
    <location>
        <begin position="129"/>
        <end position="133"/>
    </location>
</feature>
<feature type="helix" evidence="38">
    <location>
        <begin position="143"/>
        <end position="146"/>
    </location>
</feature>
<feature type="helix" evidence="38">
    <location>
        <begin position="148"/>
        <end position="150"/>
    </location>
</feature>
<feature type="strand" evidence="38">
    <location>
        <begin position="160"/>
        <end position="164"/>
    </location>
</feature>
<feature type="helix" evidence="38">
    <location>
        <begin position="171"/>
        <end position="173"/>
    </location>
</feature>
<feature type="helix" evidence="38">
    <location>
        <begin position="179"/>
        <end position="194"/>
    </location>
</feature>
<feature type="strand" evidence="38">
    <location>
        <begin position="200"/>
        <end position="204"/>
    </location>
</feature>
<feature type="strand" evidence="38">
    <location>
        <begin position="208"/>
        <end position="211"/>
    </location>
</feature>
<feature type="helix" evidence="38">
    <location>
        <begin position="213"/>
        <end position="223"/>
    </location>
</feature>
<feature type="helix" evidence="38">
    <location>
        <begin position="233"/>
        <end position="235"/>
    </location>
</feature>
<feature type="helix" evidence="38">
    <location>
        <begin position="239"/>
        <end position="242"/>
    </location>
</feature>
<feature type="strand" evidence="38">
    <location>
        <begin position="245"/>
        <end position="247"/>
    </location>
</feature>
<feature type="strand" evidence="38">
    <location>
        <begin position="251"/>
        <end position="254"/>
    </location>
</feature>
<feature type="helix" evidence="38">
    <location>
        <begin position="264"/>
        <end position="266"/>
    </location>
</feature>
<feature type="strand" evidence="39">
    <location>
        <begin position="271"/>
        <end position="273"/>
    </location>
</feature>
<feature type="strand" evidence="38">
    <location>
        <begin position="283"/>
        <end position="290"/>
    </location>
</feature>
<feature type="helix" evidence="39">
    <location>
        <begin position="294"/>
        <end position="296"/>
    </location>
</feature>
<feature type="strand" evidence="38">
    <location>
        <begin position="303"/>
        <end position="306"/>
    </location>
</feature>
<feature type="strand" evidence="38">
    <location>
        <begin position="308"/>
        <end position="315"/>
    </location>
</feature>
<feature type="helix" evidence="38">
    <location>
        <begin position="322"/>
        <end position="332"/>
    </location>
</feature>
<feature type="strand" evidence="38">
    <location>
        <begin position="335"/>
        <end position="340"/>
    </location>
</feature>
<feature type="strand" evidence="39">
    <location>
        <begin position="344"/>
        <end position="346"/>
    </location>
</feature>
<feature type="turn" evidence="38">
    <location>
        <begin position="348"/>
        <end position="350"/>
    </location>
</feature>
<feature type="helix" evidence="38">
    <location>
        <begin position="351"/>
        <end position="355"/>
    </location>
</feature>
<feature type="helix" evidence="38">
    <location>
        <begin position="356"/>
        <end position="358"/>
    </location>
</feature>
<feature type="strand" evidence="40">
    <location>
        <begin position="366"/>
        <end position="368"/>
    </location>
</feature>
<feature type="strand" evidence="39">
    <location>
        <begin position="390"/>
        <end position="393"/>
    </location>
</feature>
<feature type="helix" evidence="35">
    <location>
        <begin position="489"/>
        <end position="491"/>
    </location>
</feature>
<evidence type="ECO:0000250" key="1">
    <source>
        <dbReference type="UniProtKB" id="Q8K4J0"/>
    </source>
</evidence>
<evidence type="ECO:0000256" key="2">
    <source>
        <dbReference type="SAM" id="MobiDB-lite"/>
    </source>
</evidence>
<evidence type="ECO:0000269" key="3">
    <source>
    </source>
</evidence>
<evidence type="ECO:0000269" key="4">
    <source>
    </source>
</evidence>
<evidence type="ECO:0000269" key="5">
    <source>
    </source>
</evidence>
<evidence type="ECO:0000269" key="6">
    <source>
    </source>
</evidence>
<evidence type="ECO:0000269" key="7">
    <source>
    </source>
</evidence>
<evidence type="ECO:0000269" key="8">
    <source>
    </source>
</evidence>
<evidence type="ECO:0000269" key="9">
    <source>
    </source>
</evidence>
<evidence type="ECO:0000269" key="10">
    <source>
    </source>
</evidence>
<evidence type="ECO:0000269" key="11">
    <source>
    </source>
</evidence>
<evidence type="ECO:0000269" key="12">
    <source>
    </source>
</evidence>
<evidence type="ECO:0000269" key="13">
    <source>
    </source>
</evidence>
<evidence type="ECO:0000269" key="14">
    <source>
    </source>
</evidence>
<evidence type="ECO:0000269" key="15">
    <source>
    </source>
</evidence>
<evidence type="ECO:0000269" key="16">
    <source>
    </source>
</evidence>
<evidence type="ECO:0000269" key="17">
    <source>
    </source>
</evidence>
<evidence type="ECO:0000269" key="18">
    <source>
    </source>
</evidence>
<evidence type="ECO:0000269" key="19">
    <source>
    </source>
</evidence>
<evidence type="ECO:0000269" key="20">
    <source>
    </source>
</evidence>
<evidence type="ECO:0000269" key="21">
    <source>
    </source>
</evidence>
<evidence type="ECO:0000269" key="22">
    <source>
    </source>
</evidence>
<evidence type="ECO:0000269" key="23">
    <source>
    </source>
</evidence>
<evidence type="ECO:0000269" key="24">
    <source ref="4"/>
</evidence>
<evidence type="ECO:0000303" key="25">
    <source>
    </source>
</evidence>
<evidence type="ECO:0000303" key="26">
    <source>
    </source>
</evidence>
<evidence type="ECO:0000303" key="27">
    <source>
    </source>
</evidence>
<evidence type="ECO:0000303" key="28">
    <source>
    </source>
</evidence>
<evidence type="ECO:0000303" key="29">
    <source>
    </source>
</evidence>
<evidence type="ECO:0000305" key="30"/>
<evidence type="ECO:0000312" key="31">
    <source>
        <dbReference type="HGNC" id="HGNC:17642"/>
    </source>
</evidence>
<evidence type="ECO:0007744" key="32">
    <source>
        <dbReference type="PDB" id="3W1B"/>
    </source>
</evidence>
<evidence type="ECO:0007744" key="33">
    <source>
        <dbReference type="PDB" id="3W1G"/>
    </source>
</evidence>
<evidence type="ECO:0007744" key="34">
    <source>
        <dbReference type="PDB" id="4HTP"/>
    </source>
</evidence>
<evidence type="ECO:0007829" key="35">
    <source>
        <dbReference type="PDB" id="4HTP"/>
    </source>
</evidence>
<evidence type="ECO:0007829" key="36">
    <source>
        <dbReference type="PDB" id="6WNL"/>
    </source>
</evidence>
<evidence type="ECO:0007829" key="37">
    <source>
        <dbReference type="PDB" id="7ABS"/>
    </source>
</evidence>
<evidence type="ECO:0007829" key="38">
    <source>
        <dbReference type="PDB" id="7AFU"/>
    </source>
</evidence>
<evidence type="ECO:0007829" key="39">
    <source>
        <dbReference type="PDB" id="7SGL"/>
    </source>
</evidence>
<evidence type="ECO:0007829" key="40">
    <source>
        <dbReference type="PDB" id="7TYR"/>
    </source>
</evidence>
<organism>
    <name type="scientific">Homo sapiens</name>
    <name type="common">Human</name>
    <dbReference type="NCBI Taxonomy" id="9606"/>
    <lineage>
        <taxon>Eukaryota</taxon>
        <taxon>Metazoa</taxon>
        <taxon>Chordata</taxon>
        <taxon>Craniata</taxon>
        <taxon>Vertebrata</taxon>
        <taxon>Euteleostomi</taxon>
        <taxon>Mammalia</taxon>
        <taxon>Eutheria</taxon>
        <taxon>Euarchontoglires</taxon>
        <taxon>Primates</taxon>
        <taxon>Haplorrhini</taxon>
        <taxon>Catarrhini</taxon>
        <taxon>Hominidae</taxon>
        <taxon>Homo</taxon>
    </lineage>
</organism>
<protein>
    <recommendedName>
        <fullName evidence="25">Protein artemis</fullName>
        <ecNumber evidence="4">3.1.-.-</ecNumber>
    </recommendedName>
    <alternativeName>
        <fullName evidence="27">DNA cross-link repair 1C protein</fullName>
    </alternativeName>
    <alternativeName>
        <fullName evidence="25">Protein A-SCID</fullName>
    </alternativeName>
    <alternativeName>
        <fullName evidence="27">SNM1 homolog C</fullName>
        <shortName evidence="27">hSNM1C</shortName>
    </alternativeName>
    <alternativeName>
        <fullName evidence="26">SNM1-like protein</fullName>
    </alternativeName>
</protein>